<gene>
    <name evidence="1" type="primary">rpsF</name>
    <name type="ordered locus">EAT1b_1745</name>
</gene>
<reference key="1">
    <citation type="journal article" date="2011" name="J. Bacteriol.">
        <title>Complete genome sequence of the Thermophilic Bacterium Exiguobacterium sp. AT1b.</title>
        <authorList>
            <person name="Vishnivetskaya T.A."/>
            <person name="Lucas S."/>
            <person name="Copeland A."/>
            <person name="Lapidus A."/>
            <person name="Glavina del Rio T."/>
            <person name="Dalin E."/>
            <person name="Tice H."/>
            <person name="Bruce D.C."/>
            <person name="Goodwin L.A."/>
            <person name="Pitluck S."/>
            <person name="Saunders E."/>
            <person name="Brettin T."/>
            <person name="Detter C."/>
            <person name="Han C."/>
            <person name="Larimer F."/>
            <person name="Land M.L."/>
            <person name="Hauser L.J."/>
            <person name="Kyrpides N.C."/>
            <person name="Ovchinnikova G."/>
            <person name="Kathariou S."/>
            <person name="Ramaley R.F."/>
            <person name="Rodrigues D.F."/>
            <person name="Hendrix C."/>
            <person name="Richardson P."/>
            <person name="Tiedje J.M."/>
        </authorList>
    </citation>
    <scope>NUCLEOTIDE SEQUENCE [LARGE SCALE GENOMIC DNA]</scope>
    <source>
        <strain>ATCC BAA-1283 / AT1b</strain>
    </source>
</reference>
<sequence>MRKYELLYIIRPSVDEEAKKALIERFNNVITENGGTVEKTTDMGKRRFAYEINKMREGHYVLLNIVAEPKAILETERLMKISDDVVRQMTTKDER</sequence>
<dbReference type="EMBL" id="CP001615">
    <property type="protein sequence ID" value="ACQ70671.1"/>
    <property type="molecule type" value="Genomic_DNA"/>
</dbReference>
<dbReference type="RefSeq" id="WP_015880230.1">
    <property type="nucleotide sequence ID" value="NC_012673.1"/>
</dbReference>
<dbReference type="SMR" id="C4L008"/>
<dbReference type="STRING" id="360911.EAT1b_1745"/>
<dbReference type="GeneID" id="94373598"/>
<dbReference type="KEGG" id="eat:EAT1b_1745"/>
<dbReference type="eggNOG" id="COG0360">
    <property type="taxonomic scope" value="Bacteria"/>
</dbReference>
<dbReference type="HOGENOM" id="CLU_113441_5_3_9"/>
<dbReference type="OrthoDB" id="9812702at2"/>
<dbReference type="Proteomes" id="UP000000716">
    <property type="component" value="Chromosome"/>
</dbReference>
<dbReference type="GO" id="GO:0005737">
    <property type="term" value="C:cytoplasm"/>
    <property type="evidence" value="ECO:0007669"/>
    <property type="project" value="UniProtKB-ARBA"/>
</dbReference>
<dbReference type="GO" id="GO:1990904">
    <property type="term" value="C:ribonucleoprotein complex"/>
    <property type="evidence" value="ECO:0007669"/>
    <property type="project" value="UniProtKB-KW"/>
</dbReference>
<dbReference type="GO" id="GO:0005840">
    <property type="term" value="C:ribosome"/>
    <property type="evidence" value="ECO:0007669"/>
    <property type="project" value="UniProtKB-KW"/>
</dbReference>
<dbReference type="GO" id="GO:0070181">
    <property type="term" value="F:small ribosomal subunit rRNA binding"/>
    <property type="evidence" value="ECO:0007669"/>
    <property type="project" value="TreeGrafter"/>
</dbReference>
<dbReference type="GO" id="GO:0003735">
    <property type="term" value="F:structural constituent of ribosome"/>
    <property type="evidence" value="ECO:0007669"/>
    <property type="project" value="InterPro"/>
</dbReference>
<dbReference type="GO" id="GO:0006412">
    <property type="term" value="P:translation"/>
    <property type="evidence" value="ECO:0007669"/>
    <property type="project" value="UniProtKB-UniRule"/>
</dbReference>
<dbReference type="CDD" id="cd00473">
    <property type="entry name" value="bS6"/>
    <property type="match status" value="1"/>
</dbReference>
<dbReference type="FunFam" id="3.30.70.60:FF:000002">
    <property type="entry name" value="30S ribosomal protein S6"/>
    <property type="match status" value="1"/>
</dbReference>
<dbReference type="Gene3D" id="3.30.70.60">
    <property type="match status" value="1"/>
</dbReference>
<dbReference type="HAMAP" id="MF_00360">
    <property type="entry name" value="Ribosomal_bS6"/>
    <property type="match status" value="1"/>
</dbReference>
<dbReference type="InterPro" id="IPR000529">
    <property type="entry name" value="Ribosomal_bS6"/>
</dbReference>
<dbReference type="InterPro" id="IPR035980">
    <property type="entry name" value="Ribosomal_bS6_sf"/>
</dbReference>
<dbReference type="InterPro" id="IPR020814">
    <property type="entry name" value="Ribosomal_S6_plastid/chlpt"/>
</dbReference>
<dbReference type="InterPro" id="IPR014717">
    <property type="entry name" value="Transl_elong_EF1B/ribsomal_bS6"/>
</dbReference>
<dbReference type="NCBIfam" id="TIGR00166">
    <property type="entry name" value="S6"/>
    <property type="match status" value="1"/>
</dbReference>
<dbReference type="PANTHER" id="PTHR21011">
    <property type="entry name" value="MITOCHONDRIAL 28S RIBOSOMAL PROTEIN S6"/>
    <property type="match status" value="1"/>
</dbReference>
<dbReference type="PANTHER" id="PTHR21011:SF1">
    <property type="entry name" value="SMALL RIBOSOMAL SUBUNIT PROTEIN BS6M"/>
    <property type="match status" value="1"/>
</dbReference>
<dbReference type="Pfam" id="PF01250">
    <property type="entry name" value="Ribosomal_S6"/>
    <property type="match status" value="1"/>
</dbReference>
<dbReference type="SUPFAM" id="SSF54995">
    <property type="entry name" value="Ribosomal protein S6"/>
    <property type="match status" value="1"/>
</dbReference>
<feature type="chain" id="PRO_1000205397" description="Small ribosomal subunit protein bS6">
    <location>
        <begin position="1"/>
        <end position="95"/>
    </location>
</feature>
<organism>
    <name type="scientific">Exiguobacterium sp. (strain ATCC BAA-1283 / AT1b)</name>
    <dbReference type="NCBI Taxonomy" id="360911"/>
    <lineage>
        <taxon>Bacteria</taxon>
        <taxon>Bacillati</taxon>
        <taxon>Bacillota</taxon>
        <taxon>Bacilli</taxon>
        <taxon>Bacillales</taxon>
        <taxon>Bacillales Family XII. Incertae Sedis</taxon>
        <taxon>Exiguobacterium</taxon>
    </lineage>
</organism>
<keyword id="KW-0687">Ribonucleoprotein</keyword>
<keyword id="KW-0689">Ribosomal protein</keyword>
<keyword id="KW-0694">RNA-binding</keyword>
<keyword id="KW-0699">rRNA-binding</keyword>
<name>RS6_EXISA</name>
<comment type="function">
    <text evidence="1">Binds together with bS18 to 16S ribosomal RNA.</text>
</comment>
<comment type="similarity">
    <text evidence="1">Belongs to the bacterial ribosomal protein bS6 family.</text>
</comment>
<proteinExistence type="inferred from homology"/>
<evidence type="ECO:0000255" key="1">
    <source>
        <dbReference type="HAMAP-Rule" id="MF_00360"/>
    </source>
</evidence>
<evidence type="ECO:0000305" key="2"/>
<accession>C4L008</accession>
<protein>
    <recommendedName>
        <fullName evidence="1">Small ribosomal subunit protein bS6</fullName>
    </recommendedName>
    <alternativeName>
        <fullName evidence="2">30S ribosomal protein S6</fullName>
    </alternativeName>
</protein>